<gene>
    <name evidence="1" type="primary">recR</name>
    <name type="ordered locus">SSPA2079</name>
</gene>
<comment type="function">
    <text evidence="1">May play a role in DNA repair. It seems to be involved in an RecBC-independent recombinational process of DNA repair. It may act with RecF and RecO.</text>
</comment>
<comment type="similarity">
    <text evidence="1">Belongs to the RecR family.</text>
</comment>
<sequence length="201" mass="21715">MQTSPLLTQLMEALRCLPGVGPKSAQRMAFTLLQRDRSGGMRLAQALTRAMSEIGHCADCRTFTEQDVCNICSNPRRQENGQICVVESPADIYAIEQTGQFSGRYFVLMGHLSPLDGIGPDDIGLDRLEQRLASEKISELILATNPTVEGEATANYIAELCAEAGVEASRIAHGVPVGGELEMVDGTTLSHSLAGRHKIIF</sequence>
<evidence type="ECO:0000255" key="1">
    <source>
        <dbReference type="HAMAP-Rule" id="MF_00017"/>
    </source>
</evidence>
<organism>
    <name type="scientific">Salmonella paratyphi A (strain AKU_12601)</name>
    <dbReference type="NCBI Taxonomy" id="554290"/>
    <lineage>
        <taxon>Bacteria</taxon>
        <taxon>Pseudomonadati</taxon>
        <taxon>Pseudomonadota</taxon>
        <taxon>Gammaproteobacteria</taxon>
        <taxon>Enterobacterales</taxon>
        <taxon>Enterobacteriaceae</taxon>
        <taxon>Salmonella</taxon>
    </lineage>
</organism>
<accession>B5BD46</accession>
<proteinExistence type="inferred from homology"/>
<reference key="1">
    <citation type="journal article" date="2009" name="BMC Genomics">
        <title>Pseudogene accumulation in the evolutionary histories of Salmonella enterica serovars Paratyphi A and Typhi.</title>
        <authorList>
            <person name="Holt K.E."/>
            <person name="Thomson N.R."/>
            <person name="Wain J."/>
            <person name="Langridge G.C."/>
            <person name="Hasan R."/>
            <person name="Bhutta Z.A."/>
            <person name="Quail M.A."/>
            <person name="Norbertczak H."/>
            <person name="Walker D."/>
            <person name="Simmonds M."/>
            <person name="White B."/>
            <person name="Bason N."/>
            <person name="Mungall K."/>
            <person name="Dougan G."/>
            <person name="Parkhill J."/>
        </authorList>
    </citation>
    <scope>NUCLEOTIDE SEQUENCE [LARGE SCALE GENOMIC DNA]</scope>
    <source>
        <strain>AKU_12601</strain>
    </source>
</reference>
<feature type="chain" id="PRO_1000089768" description="Recombination protein RecR">
    <location>
        <begin position="1"/>
        <end position="201"/>
    </location>
</feature>
<feature type="domain" description="Toprim" evidence="1">
    <location>
        <begin position="81"/>
        <end position="176"/>
    </location>
</feature>
<feature type="zinc finger region" description="C4-type" evidence="1">
    <location>
        <begin position="57"/>
        <end position="72"/>
    </location>
</feature>
<dbReference type="EMBL" id="FM200053">
    <property type="protein sequence ID" value="CAR60289.1"/>
    <property type="molecule type" value="Genomic_DNA"/>
</dbReference>
<dbReference type="RefSeq" id="WP_001195023.1">
    <property type="nucleotide sequence ID" value="NC_011147.1"/>
</dbReference>
<dbReference type="SMR" id="B5BD46"/>
<dbReference type="KEGG" id="sek:SSPA2079"/>
<dbReference type="HOGENOM" id="CLU_060739_1_2_6"/>
<dbReference type="Proteomes" id="UP000001869">
    <property type="component" value="Chromosome"/>
</dbReference>
<dbReference type="GO" id="GO:0003677">
    <property type="term" value="F:DNA binding"/>
    <property type="evidence" value="ECO:0007669"/>
    <property type="project" value="UniProtKB-UniRule"/>
</dbReference>
<dbReference type="GO" id="GO:0008270">
    <property type="term" value="F:zinc ion binding"/>
    <property type="evidence" value="ECO:0007669"/>
    <property type="project" value="UniProtKB-KW"/>
</dbReference>
<dbReference type="GO" id="GO:0006310">
    <property type="term" value="P:DNA recombination"/>
    <property type="evidence" value="ECO:0007669"/>
    <property type="project" value="UniProtKB-UniRule"/>
</dbReference>
<dbReference type="GO" id="GO:0006281">
    <property type="term" value="P:DNA repair"/>
    <property type="evidence" value="ECO:0007669"/>
    <property type="project" value="UniProtKB-UniRule"/>
</dbReference>
<dbReference type="CDD" id="cd01025">
    <property type="entry name" value="TOPRIM_recR"/>
    <property type="match status" value="1"/>
</dbReference>
<dbReference type="FunFam" id="1.10.8.420:FF:000001">
    <property type="entry name" value="Recombination protein RecR"/>
    <property type="match status" value="1"/>
</dbReference>
<dbReference type="FunFam" id="3.40.1360.10:FF:000001">
    <property type="entry name" value="Recombination protein RecR"/>
    <property type="match status" value="1"/>
</dbReference>
<dbReference type="Gene3D" id="3.40.1360.10">
    <property type="match status" value="1"/>
</dbReference>
<dbReference type="Gene3D" id="6.10.250.240">
    <property type="match status" value="1"/>
</dbReference>
<dbReference type="Gene3D" id="1.10.8.420">
    <property type="entry name" value="RecR Domain 1"/>
    <property type="match status" value="1"/>
</dbReference>
<dbReference type="HAMAP" id="MF_00017">
    <property type="entry name" value="RecR"/>
    <property type="match status" value="1"/>
</dbReference>
<dbReference type="InterPro" id="IPR000093">
    <property type="entry name" value="DNA_Rcmb_RecR"/>
</dbReference>
<dbReference type="InterPro" id="IPR023627">
    <property type="entry name" value="Rcmb_RecR"/>
</dbReference>
<dbReference type="InterPro" id="IPR015967">
    <property type="entry name" value="Rcmb_RecR_Znf"/>
</dbReference>
<dbReference type="InterPro" id="IPR006171">
    <property type="entry name" value="TOPRIM_dom"/>
</dbReference>
<dbReference type="InterPro" id="IPR034137">
    <property type="entry name" value="TOPRIM_RecR"/>
</dbReference>
<dbReference type="NCBIfam" id="TIGR00615">
    <property type="entry name" value="recR"/>
    <property type="match status" value="1"/>
</dbReference>
<dbReference type="PANTHER" id="PTHR30446">
    <property type="entry name" value="RECOMBINATION PROTEIN RECR"/>
    <property type="match status" value="1"/>
</dbReference>
<dbReference type="PANTHER" id="PTHR30446:SF0">
    <property type="entry name" value="RECOMBINATION PROTEIN RECR"/>
    <property type="match status" value="1"/>
</dbReference>
<dbReference type="Pfam" id="PF21175">
    <property type="entry name" value="RecR_C"/>
    <property type="match status" value="1"/>
</dbReference>
<dbReference type="Pfam" id="PF21176">
    <property type="entry name" value="RecR_HhH"/>
    <property type="match status" value="1"/>
</dbReference>
<dbReference type="Pfam" id="PF02132">
    <property type="entry name" value="RecR_ZnF"/>
    <property type="match status" value="1"/>
</dbReference>
<dbReference type="Pfam" id="PF13662">
    <property type="entry name" value="Toprim_4"/>
    <property type="match status" value="1"/>
</dbReference>
<dbReference type="SMART" id="SM00493">
    <property type="entry name" value="TOPRIM"/>
    <property type="match status" value="1"/>
</dbReference>
<dbReference type="SUPFAM" id="SSF111304">
    <property type="entry name" value="Recombination protein RecR"/>
    <property type="match status" value="1"/>
</dbReference>
<dbReference type="PROSITE" id="PS01300">
    <property type="entry name" value="RECR"/>
    <property type="match status" value="1"/>
</dbReference>
<dbReference type="PROSITE" id="PS50880">
    <property type="entry name" value="TOPRIM"/>
    <property type="match status" value="1"/>
</dbReference>
<name>RECR_SALPK</name>
<keyword id="KW-0227">DNA damage</keyword>
<keyword id="KW-0233">DNA recombination</keyword>
<keyword id="KW-0234">DNA repair</keyword>
<keyword id="KW-0479">Metal-binding</keyword>
<keyword id="KW-0862">Zinc</keyword>
<keyword id="KW-0863">Zinc-finger</keyword>
<protein>
    <recommendedName>
        <fullName evidence="1">Recombination protein RecR</fullName>
    </recommendedName>
</protein>